<proteinExistence type="evidence at transcript level"/>
<keyword id="KW-0021">Allosteric enzyme</keyword>
<keyword id="KW-0120">Carbon dioxide fixation</keyword>
<keyword id="KW-0963">Cytoplasm</keyword>
<keyword id="KW-0456">Lyase</keyword>
<keyword id="KW-0460">Magnesium</keyword>
<keyword id="KW-0597">Phosphoprotein</keyword>
<keyword id="KW-0602">Photosynthesis</keyword>
<comment type="function">
    <text>Through the carboxylation of phosphoenolpyruvate (PEP) it forms oxaloacetate, a four-carbon dicarboxylic acid source for the tricarboxylic acid cycle.</text>
</comment>
<comment type="catalytic activity">
    <reaction>
        <text>oxaloacetate + phosphate = phosphoenolpyruvate + hydrogencarbonate</text>
        <dbReference type="Rhea" id="RHEA:28370"/>
        <dbReference type="ChEBI" id="CHEBI:16452"/>
        <dbReference type="ChEBI" id="CHEBI:17544"/>
        <dbReference type="ChEBI" id="CHEBI:43474"/>
        <dbReference type="ChEBI" id="CHEBI:58702"/>
        <dbReference type="EC" id="4.1.1.31"/>
    </reaction>
</comment>
<comment type="cofactor">
    <cofactor evidence="1">
        <name>Mg(2+)</name>
        <dbReference type="ChEBI" id="CHEBI:18420"/>
    </cofactor>
</comment>
<comment type="activity regulation">
    <text evidence="1">By light-reversible phosphorylation.</text>
</comment>
<comment type="pathway">
    <text>Photosynthesis; C3 acid pathway.</text>
</comment>
<comment type="subunit">
    <text>Homotetramer.</text>
</comment>
<comment type="subcellular location">
    <subcellularLocation>
        <location>Cytoplasm</location>
    </subcellularLocation>
</comment>
<comment type="similarity">
    <text evidence="2">Belongs to the PEPCase type 1 family.</text>
</comment>
<dbReference type="EC" id="4.1.1.31"/>
<dbReference type="EMBL" id="X55664">
    <property type="protein sequence ID" value="CAA39197.1"/>
    <property type="molecule type" value="mRNA"/>
</dbReference>
<dbReference type="EMBL" id="X65137">
    <property type="protein sequence ID" value="CAA46267.1"/>
    <property type="molecule type" value="Genomic_DNA"/>
</dbReference>
<dbReference type="PIR" id="JH0381">
    <property type="entry name" value="JH0381"/>
</dbReference>
<dbReference type="PIR" id="S31159">
    <property type="entry name" value="S31159"/>
</dbReference>
<dbReference type="SMR" id="P29195"/>
<dbReference type="eggNOG" id="ENOG502QPVS">
    <property type="taxonomic scope" value="Eukaryota"/>
</dbReference>
<dbReference type="SABIO-RK" id="P29195"/>
<dbReference type="UniPathway" id="UPA00321"/>
<dbReference type="ExpressionAtlas" id="P29195">
    <property type="expression patterns" value="baseline and differential"/>
</dbReference>
<dbReference type="GO" id="GO:0005737">
    <property type="term" value="C:cytoplasm"/>
    <property type="evidence" value="ECO:0007669"/>
    <property type="project" value="UniProtKB-SubCell"/>
</dbReference>
<dbReference type="GO" id="GO:0008964">
    <property type="term" value="F:phosphoenolpyruvate carboxylase activity"/>
    <property type="evidence" value="ECO:0007669"/>
    <property type="project" value="UniProtKB-EC"/>
</dbReference>
<dbReference type="GO" id="GO:0015977">
    <property type="term" value="P:carbon fixation"/>
    <property type="evidence" value="ECO:0007669"/>
    <property type="project" value="UniProtKB-KW"/>
</dbReference>
<dbReference type="GO" id="GO:0015979">
    <property type="term" value="P:photosynthesis"/>
    <property type="evidence" value="ECO:0007669"/>
    <property type="project" value="UniProtKB-KW"/>
</dbReference>
<dbReference type="GO" id="GO:0006099">
    <property type="term" value="P:tricarboxylic acid cycle"/>
    <property type="evidence" value="ECO:0007669"/>
    <property type="project" value="InterPro"/>
</dbReference>
<dbReference type="FunFam" id="1.20.1440.90:FF:000001">
    <property type="entry name" value="Phosphoenolpyruvate carboxylase 1"/>
    <property type="match status" value="1"/>
</dbReference>
<dbReference type="Gene3D" id="1.20.1440.90">
    <property type="entry name" value="Phosphoenolpyruvate/pyruvate domain"/>
    <property type="match status" value="1"/>
</dbReference>
<dbReference type="HAMAP" id="MF_00595">
    <property type="entry name" value="PEPcase_type1"/>
    <property type="match status" value="1"/>
</dbReference>
<dbReference type="InterPro" id="IPR021135">
    <property type="entry name" value="PEP_COase"/>
</dbReference>
<dbReference type="InterPro" id="IPR022805">
    <property type="entry name" value="PEP_COase_bac/pln-type"/>
</dbReference>
<dbReference type="InterPro" id="IPR018129">
    <property type="entry name" value="PEP_COase_Lys_AS"/>
</dbReference>
<dbReference type="InterPro" id="IPR033129">
    <property type="entry name" value="PEPCASE_His_AS"/>
</dbReference>
<dbReference type="InterPro" id="IPR015813">
    <property type="entry name" value="Pyrv/PenolPyrv_kinase-like_dom"/>
</dbReference>
<dbReference type="NCBIfam" id="NF000584">
    <property type="entry name" value="PRK00009.1"/>
    <property type="match status" value="1"/>
</dbReference>
<dbReference type="PANTHER" id="PTHR30523">
    <property type="entry name" value="PHOSPHOENOLPYRUVATE CARBOXYLASE"/>
    <property type="match status" value="1"/>
</dbReference>
<dbReference type="PANTHER" id="PTHR30523:SF47">
    <property type="entry name" value="PHOSPHOENOLPYRUVATE CARBOXYLASE 2"/>
    <property type="match status" value="1"/>
</dbReference>
<dbReference type="Pfam" id="PF00311">
    <property type="entry name" value="PEPcase"/>
    <property type="match status" value="1"/>
</dbReference>
<dbReference type="PRINTS" id="PR00150">
    <property type="entry name" value="PEPCARBXLASE"/>
</dbReference>
<dbReference type="SUPFAM" id="SSF51621">
    <property type="entry name" value="Phosphoenolpyruvate/pyruvate domain"/>
    <property type="match status" value="1"/>
</dbReference>
<dbReference type="PROSITE" id="PS00781">
    <property type="entry name" value="PEPCASE_1"/>
    <property type="match status" value="1"/>
</dbReference>
<dbReference type="PROSITE" id="PS00393">
    <property type="entry name" value="PEPCASE_2"/>
    <property type="match status" value="1"/>
</dbReference>
<accession>P29195</accession>
<gene>
    <name type="primary">PEPC</name>
</gene>
<evidence type="ECO:0000250" key="1"/>
<evidence type="ECO:0000305" key="2"/>
<sequence length="960" mass="109439">MPERHQSIDAQLRLLAPGKVSEDDKLVEYDALLVDRFLDILQDLHGPHLREFVQECYELSAEYENDRDEARLGELGSKLTSLPPGDSIVVASSFSHMLNLANLAEEVQVAQRRRIKLKRGDFADEASAPTESDIEETLKRLVSQLGKSREEVFDALKNQTVDLVFTAHPTQSVRRSLLQKHGRIRNCLRQLYAKDITADDKQELDEALQREIQAAFRTDEIRRTPPTPQDEMRAGMSYFHETIWKGVPKFLRRIDTALKNIGINERLPYNAPLIQFSSWMGGDRDGNPRVTPEVTRDVCLLARMMAANLYFSQIEDLMFELSMWRCSDELRIRADELHRSSKRAAKHYIEFWKQVPPNEPYRVILGDVRDKLYYTRERSRHLLSSGISEIPEEATFTNVEQFLEPLELCYRSLCACGDKPIADGSLLDFLRQVFNFGLALVKLDIRQESDRHTDVLDSITTHLGIGSYAEWSEEKRQDWLLSELRGKRPLFGSDLPQTEETADVLGTFHVLAELPADCFGAYIISMATAPSDVLAVELLQRECHVKQPLRVVPLFEKLADLEAAPAAVARLFSIDWYMNRINGKQEVMIGYSDSGKDAGRLSAAWQMYKAQEELIKVAKHYGVKLTMFHGRGGTVGRGGGPTHLAILSQPPDTIHGSLRVTVQGEVIEHSFGEELLCFRTLQRYTAATLEHGMHPPISPKPEWRALMDEMAVVATKEYRSIVFQEPRFVEYFRSATPETEYGRMNIGSRPSKRKPSGGIESLRAIPWIFAWTQTRFHLPVWLGFGAAIKHIMQKDIRNIHVLKEMYNEWPFFRVTLDLLEMVFAKGDPGIAAVYDKLLVAEDLQSFGEQLRKNYEETKELLLQVAGHKDVLEGDPYLKQRLRLRESYITTLNVCQAYTLKRIRDPSFQVSPQPPLSKEFTDESQPVELVQLNQQSEYAPGLEDTLILTMKGIAAGMQNTG</sequence>
<reference key="1">
    <citation type="journal article" date="1991" name="Gene">
        <title>The phosphoenolpyruvate carboxylase gene family of Sorghum: promoter structures, amino acid sequences and expression of genes.</title>
        <authorList>
            <person name="Cretin C."/>
            <person name="Santi S."/>
            <person name="Keryer E."/>
            <person name="Lepiniec L."/>
            <person name="Tagu D."/>
            <person name="Vidal J."/>
            <person name="Gadal P."/>
        </authorList>
    </citation>
    <scope>NUCLEOTIDE SEQUENCE [MRNA]</scope>
    <source>
        <tissue>Root</tissue>
    </source>
</reference>
<reference key="2">
    <citation type="journal article" date="1993" name="Plant Mol. Biol.">
        <title>Sorghum phosphoenolpyruvate carboxylase gene family: structure, function and molecular evolution.</title>
        <authorList>
            <person name="Lepiniec L."/>
            <person name="Keryer E."/>
            <person name="Philippe H."/>
            <person name="Gadal P."/>
            <person name="Cretin C."/>
        </authorList>
    </citation>
    <scope>NUCLEOTIDE SEQUENCE [GENOMIC DNA]</scope>
</reference>
<name>CAPP1_SORBI</name>
<organism>
    <name type="scientific">Sorghum bicolor</name>
    <name type="common">Sorghum</name>
    <name type="synonym">Sorghum vulgare</name>
    <dbReference type="NCBI Taxonomy" id="4558"/>
    <lineage>
        <taxon>Eukaryota</taxon>
        <taxon>Viridiplantae</taxon>
        <taxon>Streptophyta</taxon>
        <taxon>Embryophyta</taxon>
        <taxon>Tracheophyta</taxon>
        <taxon>Spermatophyta</taxon>
        <taxon>Magnoliopsida</taxon>
        <taxon>Liliopsida</taxon>
        <taxon>Poales</taxon>
        <taxon>Poaceae</taxon>
        <taxon>PACMAD clade</taxon>
        <taxon>Panicoideae</taxon>
        <taxon>Andropogonodae</taxon>
        <taxon>Andropogoneae</taxon>
        <taxon>Sorghinae</taxon>
        <taxon>Sorghum</taxon>
    </lineage>
</organism>
<feature type="chain" id="PRO_0000166676" description="Phosphoenolpyruvate carboxylase 1">
    <location>
        <begin position="1"/>
        <end position="960"/>
    </location>
</feature>
<feature type="active site" evidence="1">
    <location>
        <position position="168"/>
    </location>
</feature>
<feature type="active site" evidence="1">
    <location>
        <position position="596"/>
    </location>
</feature>
<feature type="modified residue" description="Phosphoserine" evidence="1">
    <location>
        <position position="7"/>
    </location>
</feature>
<protein>
    <recommendedName>
        <fullName>Phosphoenolpyruvate carboxylase 1</fullName>
        <shortName>PEPC 1</shortName>
        <shortName>PEPCase 1</shortName>
        <ecNumber>4.1.1.31</ecNumber>
    </recommendedName>
    <alternativeName>
        <fullName>CP21</fullName>
    </alternativeName>
</protein>